<dbReference type="EMBL" id="CP000056">
    <property type="protein sequence ID" value="AAX71168.1"/>
    <property type="molecule type" value="Genomic_DNA"/>
</dbReference>
<dbReference type="RefSeq" id="WP_002986636.1">
    <property type="nucleotide sequence ID" value="NC_007296.2"/>
</dbReference>
<dbReference type="SMR" id="Q48VT8"/>
<dbReference type="GeneID" id="69900037"/>
<dbReference type="KEGG" id="spb:M28_Spy0054"/>
<dbReference type="HOGENOM" id="CLU_093315_2_0_9"/>
<dbReference type="GO" id="GO:1990904">
    <property type="term" value="C:ribonucleoprotein complex"/>
    <property type="evidence" value="ECO:0007669"/>
    <property type="project" value="UniProtKB-KW"/>
</dbReference>
<dbReference type="GO" id="GO:0005840">
    <property type="term" value="C:ribosome"/>
    <property type="evidence" value="ECO:0007669"/>
    <property type="project" value="UniProtKB-KW"/>
</dbReference>
<dbReference type="GO" id="GO:0019843">
    <property type="term" value="F:rRNA binding"/>
    <property type="evidence" value="ECO:0007669"/>
    <property type="project" value="UniProtKB-UniRule"/>
</dbReference>
<dbReference type="GO" id="GO:0003735">
    <property type="term" value="F:structural constituent of ribosome"/>
    <property type="evidence" value="ECO:0007669"/>
    <property type="project" value="InterPro"/>
</dbReference>
<dbReference type="GO" id="GO:0006412">
    <property type="term" value="P:translation"/>
    <property type="evidence" value="ECO:0007669"/>
    <property type="project" value="UniProtKB-UniRule"/>
</dbReference>
<dbReference type="CDD" id="cd06089">
    <property type="entry name" value="KOW_RPL26"/>
    <property type="match status" value="1"/>
</dbReference>
<dbReference type="FunFam" id="2.30.30.30:FF:000004">
    <property type="entry name" value="50S ribosomal protein L24"/>
    <property type="match status" value="1"/>
</dbReference>
<dbReference type="Gene3D" id="2.30.30.30">
    <property type="match status" value="1"/>
</dbReference>
<dbReference type="HAMAP" id="MF_01326_B">
    <property type="entry name" value="Ribosomal_uL24_B"/>
    <property type="match status" value="1"/>
</dbReference>
<dbReference type="InterPro" id="IPR005824">
    <property type="entry name" value="KOW"/>
</dbReference>
<dbReference type="InterPro" id="IPR014722">
    <property type="entry name" value="Rib_uL2_dom2"/>
</dbReference>
<dbReference type="InterPro" id="IPR003256">
    <property type="entry name" value="Ribosomal_uL24"/>
</dbReference>
<dbReference type="InterPro" id="IPR005825">
    <property type="entry name" value="Ribosomal_uL24_CS"/>
</dbReference>
<dbReference type="InterPro" id="IPR041988">
    <property type="entry name" value="Ribosomal_uL24_KOW"/>
</dbReference>
<dbReference type="InterPro" id="IPR008991">
    <property type="entry name" value="Translation_prot_SH3-like_sf"/>
</dbReference>
<dbReference type="NCBIfam" id="TIGR01079">
    <property type="entry name" value="rplX_bact"/>
    <property type="match status" value="1"/>
</dbReference>
<dbReference type="PANTHER" id="PTHR12903">
    <property type="entry name" value="MITOCHONDRIAL RIBOSOMAL PROTEIN L24"/>
    <property type="match status" value="1"/>
</dbReference>
<dbReference type="Pfam" id="PF00467">
    <property type="entry name" value="KOW"/>
    <property type="match status" value="1"/>
</dbReference>
<dbReference type="Pfam" id="PF17136">
    <property type="entry name" value="ribosomal_L24"/>
    <property type="match status" value="1"/>
</dbReference>
<dbReference type="SMART" id="SM00739">
    <property type="entry name" value="KOW"/>
    <property type="match status" value="1"/>
</dbReference>
<dbReference type="SUPFAM" id="SSF50104">
    <property type="entry name" value="Translation proteins SH3-like domain"/>
    <property type="match status" value="1"/>
</dbReference>
<dbReference type="PROSITE" id="PS01108">
    <property type="entry name" value="RIBOSOMAL_L24"/>
    <property type="match status" value="1"/>
</dbReference>
<reference key="1">
    <citation type="journal article" date="2005" name="J. Infect. Dis.">
        <title>Genome sequence of a serotype M28 strain of group A Streptococcus: potential new insights into puerperal sepsis and bacterial disease specificity.</title>
        <authorList>
            <person name="Green N.M."/>
            <person name="Zhang S."/>
            <person name="Porcella S.F."/>
            <person name="Nagiec M.J."/>
            <person name="Barbian K.D."/>
            <person name="Beres S.B."/>
            <person name="Lefebvre R.B."/>
            <person name="Musser J.M."/>
        </authorList>
    </citation>
    <scope>NUCLEOTIDE SEQUENCE [LARGE SCALE GENOMIC DNA]</scope>
    <source>
        <strain>MGAS6180</strain>
    </source>
</reference>
<keyword id="KW-0687">Ribonucleoprotein</keyword>
<keyword id="KW-0689">Ribosomal protein</keyword>
<keyword id="KW-0694">RNA-binding</keyword>
<keyword id="KW-0699">rRNA-binding</keyword>
<name>RL24_STRPM</name>
<evidence type="ECO:0000255" key="1">
    <source>
        <dbReference type="HAMAP-Rule" id="MF_01326"/>
    </source>
</evidence>
<evidence type="ECO:0000305" key="2"/>
<gene>
    <name evidence="1" type="primary">rplX</name>
    <name type="ordered locus">M28_Spy0054</name>
</gene>
<accession>Q48VT8</accession>
<comment type="function">
    <text evidence="1">One of two assembly initiator proteins, it binds directly to the 5'-end of the 23S rRNA, where it nucleates assembly of the 50S subunit.</text>
</comment>
<comment type="function">
    <text evidence="1">One of the proteins that surrounds the polypeptide exit tunnel on the outside of the subunit.</text>
</comment>
<comment type="subunit">
    <text evidence="1">Part of the 50S ribosomal subunit.</text>
</comment>
<comment type="similarity">
    <text evidence="1">Belongs to the universal ribosomal protein uL24 family.</text>
</comment>
<organism>
    <name type="scientific">Streptococcus pyogenes serotype M28 (strain MGAS6180)</name>
    <dbReference type="NCBI Taxonomy" id="319701"/>
    <lineage>
        <taxon>Bacteria</taxon>
        <taxon>Bacillati</taxon>
        <taxon>Bacillota</taxon>
        <taxon>Bacilli</taxon>
        <taxon>Lactobacillales</taxon>
        <taxon>Streptococcaceae</taxon>
        <taxon>Streptococcus</taxon>
    </lineage>
</organism>
<proteinExistence type="inferred from homology"/>
<protein>
    <recommendedName>
        <fullName evidence="1">Large ribosomal subunit protein uL24</fullName>
    </recommendedName>
    <alternativeName>
        <fullName evidence="2">50S ribosomal protein L24</fullName>
    </alternativeName>
</protein>
<feature type="chain" id="PRO_0000241668" description="Large ribosomal subunit protein uL24">
    <location>
        <begin position="1"/>
        <end position="101"/>
    </location>
</feature>
<sequence>MFVKKGDKVRVIAGKDKGTEAVVLKALPKVNKVIVEGVGMIKKHQKPNTENPQGAIVEKEAPIHVSNVQVLDKNGVAGRVGYKVVDGKKVRYSKKSGEVLD</sequence>